<sequence length="177" mass="20125">MSNKAPVEPIVLGKMGSCYGIRGWLRVFSSTEDAESIFDYQPWFIQKGGKWEEVELESWRRHNQDIVIKLKGVEDRDAANLLTNCEIVVDSSQLPKLDDGYYWKDLMGCQVVTTEGYELGKVIDMMETGSNDVLVIKANLKDAFGIKERLVPFLDGQVIKKVDLTTRTIEVDWDPGF</sequence>
<reference key="1">
    <citation type="journal article" date="2010" name="PLoS Genet.">
        <title>Genome sequence of the plant growth promoting endophytic bacterium Enterobacter sp. 638.</title>
        <authorList>
            <person name="Taghavi S."/>
            <person name="van der Lelie D."/>
            <person name="Hoffman A."/>
            <person name="Zhang Y.B."/>
            <person name="Walla M.D."/>
            <person name="Vangronsveld J."/>
            <person name="Newman L."/>
            <person name="Monchy S."/>
        </authorList>
    </citation>
    <scope>NUCLEOTIDE SEQUENCE [LARGE SCALE GENOMIC DNA]</scope>
    <source>
        <strain>638</strain>
    </source>
</reference>
<dbReference type="EMBL" id="CP000653">
    <property type="protein sequence ID" value="ABP61753.1"/>
    <property type="molecule type" value="Genomic_DNA"/>
</dbReference>
<dbReference type="SMR" id="A4WDH3"/>
<dbReference type="STRING" id="399742.Ent638_3089"/>
<dbReference type="KEGG" id="ent:Ent638_3089"/>
<dbReference type="eggNOG" id="COG0806">
    <property type="taxonomic scope" value="Bacteria"/>
</dbReference>
<dbReference type="HOGENOM" id="CLU_077636_1_0_6"/>
<dbReference type="Proteomes" id="UP000000230">
    <property type="component" value="Chromosome"/>
</dbReference>
<dbReference type="GO" id="GO:0005737">
    <property type="term" value="C:cytoplasm"/>
    <property type="evidence" value="ECO:0007669"/>
    <property type="project" value="UniProtKB-SubCell"/>
</dbReference>
<dbReference type="GO" id="GO:0005840">
    <property type="term" value="C:ribosome"/>
    <property type="evidence" value="ECO:0007669"/>
    <property type="project" value="InterPro"/>
</dbReference>
<dbReference type="GO" id="GO:0043022">
    <property type="term" value="F:ribosome binding"/>
    <property type="evidence" value="ECO:0007669"/>
    <property type="project" value="InterPro"/>
</dbReference>
<dbReference type="GO" id="GO:0042274">
    <property type="term" value="P:ribosomal small subunit biogenesis"/>
    <property type="evidence" value="ECO:0007669"/>
    <property type="project" value="UniProtKB-UniRule"/>
</dbReference>
<dbReference type="GO" id="GO:0006364">
    <property type="term" value="P:rRNA processing"/>
    <property type="evidence" value="ECO:0007669"/>
    <property type="project" value="UniProtKB-UniRule"/>
</dbReference>
<dbReference type="FunFam" id="2.30.30.240:FF:000001">
    <property type="entry name" value="Ribosome maturation factor RimM"/>
    <property type="match status" value="1"/>
</dbReference>
<dbReference type="FunFam" id="2.40.30.60:FF:000001">
    <property type="entry name" value="Ribosome maturation factor RimM"/>
    <property type="match status" value="1"/>
</dbReference>
<dbReference type="Gene3D" id="2.30.30.240">
    <property type="entry name" value="PRC-barrel domain"/>
    <property type="match status" value="1"/>
</dbReference>
<dbReference type="Gene3D" id="2.40.30.60">
    <property type="entry name" value="RimM"/>
    <property type="match status" value="1"/>
</dbReference>
<dbReference type="HAMAP" id="MF_00014">
    <property type="entry name" value="Ribosome_mat_RimM"/>
    <property type="match status" value="1"/>
</dbReference>
<dbReference type="InterPro" id="IPR011033">
    <property type="entry name" value="PRC_barrel-like_sf"/>
</dbReference>
<dbReference type="InterPro" id="IPR056792">
    <property type="entry name" value="PRC_RimM"/>
</dbReference>
<dbReference type="InterPro" id="IPR011961">
    <property type="entry name" value="RimM"/>
</dbReference>
<dbReference type="InterPro" id="IPR002676">
    <property type="entry name" value="RimM_N"/>
</dbReference>
<dbReference type="InterPro" id="IPR036976">
    <property type="entry name" value="RimM_N_sf"/>
</dbReference>
<dbReference type="InterPro" id="IPR009000">
    <property type="entry name" value="Transl_B-barrel_sf"/>
</dbReference>
<dbReference type="NCBIfam" id="TIGR02273">
    <property type="entry name" value="16S_RimM"/>
    <property type="match status" value="1"/>
</dbReference>
<dbReference type="PANTHER" id="PTHR33692">
    <property type="entry name" value="RIBOSOME MATURATION FACTOR RIMM"/>
    <property type="match status" value="1"/>
</dbReference>
<dbReference type="PANTHER" id="PTHR33692:SF1">
    <property type="entry name" value="RIBOSOME MATURATION FACTOR RIMM"/>
    <property type="match status" value="1"/>
</dbReference>
<dbReference type="Pfam" id="PF24986">
    <property type="entry name" value="PRC_RimM"/>
    <property type="match status" value="1"/>
</dbReference>
<dbReference type="Pfam" id="PF01782">
    <property type="entry name" value="RimM"/>
    <property type="match status" value="1"/>
</dbReference>
<dbReference type="SUPFAM" id="SSF50346">
    <property type="entry name" value="PRC-barrel domain"/>
    <property type="match status" value="1"/>
</dbReference>
<dbReference type="SUPFAM" id="SSF50447">
    <property type="entry name" value="Translation proteins"/>
    <property type="match status" value="1"/>
</dbReference>
<proteinExistence type="inferred from homology"/>
<name>RIMM_ENT38</name>
<evidence type="ECO:0000255" key="1">
    <source>
        <dbReference type="HAMAP-Rule" id="MF_00014"/>
    </source>
</evidence>
<protein>
    <recommendedName>
        <fullName evidence="1">Ribosome maturation factor RimM</fullName>
    </recommendedName>
</protein>
<organism>
    <name type="scientific">Enterobacter sp. (strain 638)</name>
    <dbReference type="NCBI Taxonomy" id="399742"/>
    <lineage>
        <taxon>Bacteria</taxon>
        <taxon>Pseudomonadati</taxon>
        <taxon>Pseudomonadota</taxon>
        <taxon>Gammaproteobacteria</taxon>
        <taxon>Enterobacterales</taxon>
        <taxon>Enterobacteriaceae</taxon>
        <taxon>Enterobacter</taxon>
    </lineage>
</organism>
<comment type="function">
    <text evidence="1">An accessory protein needed during the final step in the assembly of 30S ribosomal subunit, possibly for assembly of the head region. Essential for efficient processing of 16S rRNA. May be needed both before and after RbfA during the maturation of 16S rRNA. It has affinity for free ribosomal 30S subunits but not for 70S ribosomes.</text>
</comment>
<comment type="subunit">
    <text evidence="1">Binds ribosomal protein uS19.</text>
</comment>
<comment type="subcellular location">
    <subcellularLocation>
        <location evidence="1">Cytoplasm</location>
    </subcellularLocation>
</comment>
<comment type="domain">
    <text evidence="1">The PRC barrel domain binds ribosomal protein uS19.</text>
</comment>
<comment type="similarity">
    <text evidence="1">Belongs to the RimM family.</text>
</comment>
<gene>
    <name evidence="1" type="primary">rimM</name>
    <name type="ordered locus">Ent638_3089</name>
</gene>
<keyword id="KW-0143">Chaperone</keyword>
<keyword id="KW-0963">Cytoplasm</keyword>
<keyword id="KW-0690">Ribosome biogenesis</keyword>
<keyword id="KW-0698">rRNA processing</keyword>
<accession>A4WDH3</accession>
<feature type="chain" id="PRO_0000321725" description="Ribosome maturation factor RimM">
    <location>
        <begin position="1"/>
        <end position="177"/>
    </location>
</feature>
<feature type="domain" description="PRC barrel" evidence="1">
    <location>
        <begin position="98"/>
        <end position="177"/>
    </location>
</feature>